<organism>
    <name type="scientific">Glycine max</name>
    <name type="common">Soybean</name>
    <name type="synonym">Glycine hispida</name>
    <dbReference type="NCBI Taxonomy" id="3847"/>
    <lineage>
        <taxon>Eukaryota</taxon>
        <taxon>Viridiplantae</taxon>
        <taxon>Streptophyta</taxon>
        <taxon>Embryophyta</taxon>
        <taxon>Tracheophyta</taxon>
        <taxon>Spermatophyta</taxon>
        <taxon>Magnoliopsida</taxon>
        <taxon>eudicotyledons</taxon>
        <taxon>Gunneridae</taxon>
        <taxon>Pentapetalae</taxon>
        <taxon>rosids</taxon>
        <taxon>fabids</taxon>
        <taxon>Fabales</taxon>
        <taxon>Fabaceae</taxon>
        <taxon>Papilionoideae</taxon>
        <taxon>50 kb inversion clade</taxon>
        <taxon>NPAAA clade</taxon>
        <taxon>indigoferoid/millettioid clade</taxon>
        <taxon>Phaseoleae</taxon>
        <taxon>Glycine</taxon>
        <taxon>Glycine subgen. Soja</taxon>
    </lineage>
</organism>
<proteinExistence type="evidence at protein level"/>
<accession>P26987</accession>
<accession>C6T1G1</accession>
<gene>
    <name evidence="5" type="primary">PR-10</name>
    <name evidence="8" type="ORF">GLYMA_07G243500</name>
</gene>
<feature type="chain" id="PRO_0000154170" description="Stress-induced protein SAM22">
    <location>
        <begin position="1"/>
        <end position="158"/>
    </location>
</feature>
<feature type="strand" evidence="9">
    <location>
        <begin position="3"/>
        <end position="14"/>
    </location>
</feature>
<feature type="helix" evidence="9">
    <location>
        <begin position="16"/>
        <end position="24"/>
    </location>
</feature>
<feature type="helix" evidence="9">
    <location>
        <begin position="27"/>
        <end position="34"/>
    </location>
</feature>
<feature type="strand" evidence="9">
    <location>
        <begin position="38"/>
        <end position="49"/>
    </location>
</feature>
<feature type="strand" evidence="9">
    <location>
        <begin position="53"/>
        <end position="60"/>
    </location>
</feature>
<feature type="strand" evidence="9">
    <location>
        <begin position="63"/>
        <end position="75"/>
    </location>
</feature>
<feature type="turn" evidence="9">
    <location>
        <begin position="76"/>
        <end position="79"/>
    </location>
</feature>
<feature type="strand" evidence="9">
    <location>
        <begin position="80"/>
        <end position="88"/>
    </location>
</feature>
<feature type="strand" evidence="9">
    <location>
        <begin position="93"/>
        <end position="96"/>
    </location>
</feature>
<feature type="strand" evidence="9">
    <location>
        <begin position="98"/>
        <end position="103"/>
    </location>
</feature>
<feature type="strand" evidence="9">
    <location>
        <begin position="110"/>
        <end position="121"/>
    </location>
</feature>
<feature type="strand" evidence="9">
    <location>
        <begin position="123"/>
        <end position="125"/>
    </location>
</feature>
<feature type="helix" evidence="9">
    <location>
        <begin position="130"/>
        <end position="153"/>
    </location>
</feature>
<comment type="function">
    <text evidence="1">Involved in disease resistance.</text>
</comment>
<comment type="tissue specificity">
    <text evidence="3">Expressed in hypocotyls and leaves.</text>
</comment>
<comment type="induction">
    <text evidence="3">Induced by salicylate, methyl viologen, chitosan, hydrogen peroxide and sodium phosphate.</text>
</comment>
<comment type="allergen">
    <text evidence="2 4">Causes an allergic reaction in human (PubMed:12417891, PubMed:14713921). Gly m 4 is the major soy allergen for patients allergic to birch pollen with soy allergy (PubMed:12417891, PubMed:14713921). Binds to IgE (PubMed:12417891, PubMed:14713921).</text>
</comment>
<comment type="similarity">
    <text evidence="7">Belongs to the BetVI family.</text>
</comment>
<keyword id="KW-0002">3D-structure</keyword>
<keyword id="KW-0020">Allergen</keyword>
<keyword id="KW-0568">Pathogenesis-related protein</keyword>
<keyword id="KW-0611">Plant defense</keyword>
<keyword id="KW-1185">Reference proteome</keyword>
<sequence>MGVFTFEDEINSPVAPATLYKALVTDADNVIPKALDSFKSVENVEGNGGPGTIKKITFLEDGETKFVLHKIESIDEANLGYSYSVVGGAALPDTAEKITFDSKLVAGPNGGSAGKLTVKYETKGDAEPNQDELKTGKAKADALFKAIEAYLLAHPDYN</sequence>
<evidence type="ECO:0000250" key="1">
    <source>
        <dbReference type="UniProtKB" id="E6YBW4"/>
    </source>
</evidence>
<evidence type="ECO:0000269" key="2">
    <source>
    </source>
</evidence>
<evidence type="ECO:0000269" key="3">
    <source>
    </source>
</evidence>
<evidence type="ECO:0000269" key="4">
    <source>
    </source>
</evidence>
<evidence type="ECO:0000303" key="5">
    <source>
    </source>
</evidence>
<evidence type="ECO:0000303" key="6">
    <source>
    </source>
</evidence>
<evidence type="ECO:0000305" key="7"/>
<evidence type="ECO:0000312" key="8">
    <source>
        <dbReference type="EMBL" id="KRH50781.1"/>
    </source>
</evidence>
<evidence type="ECO:0007829" key="9">
    <source>
        <dbReference type="PDB" id="2K7H"/>
    </source>
</evidence>
<protein>
    <recommendedName>
        <fullName evidence="6">Stress-induced protein SAM22</fullName>
    </recommendedName>
    <alternativeName>
        <fullName evidence="5">Pathogenesis-related protein 10</fullName>
    </alternativeName>
    <alternativeName>
        <fullName evidence="6">Starvation-associated message 22</fullName>
    </alternativeName>
    <allergenName evidence="7">Gly m 4</allergenName>
</protein>
<reference key="1">
    <citation type="journal article" date="1992" name="Plant Mol. Biol.">
        <title>Characterization of a stress-induced, developmentally regulated gene family from soybean.</title>
        <authorList>
            <person name="Crowell D."/>
            <person name="John M.E."/>
            <person name="Russell D."/>
            <person name="Amasino R.M."/>
        </authorList>
    </citation>
    <scope>NUCLEOTIDE SEQUENCE [MRNA]</scope>
    <scope>TISSUE SPECIFICITY</scope>
    <scope>INDUCTION</scope>
    <source>
        <strain>cv. Mandarin</strain>
    </source>
</reference>
<reference key="2">
    <citation type="submission" date="2009-08" db="EMBL/GenBank/DDBJ databases">
        <authorList>
            <person name="Cheung F."/>
            <person name="Xiao Y."/>
            <person name="Chan A."/>
            <person name="Moskal W."/>
            <person name="Town C.D."/>
        </authorList>
    </citation>
    <scope>NUCLEOTIDE SEQUENCE [MRNA]</scope>
</reference>
<reference key="3">
    <citation type="submission" date="2010-01" db="EMBL/GenBank/DDBJ databases">
        <title>Identification of proteins induced or suppressed during a susceptible host-pathogen interaction between soybean and Phakopsora pachyrhizi.</title>
        <authorList>
            <person name="Park S."/>
            <person name="Chen Z.-Y."/>
            <person name="Xie Y.-R."/>
            <person name="Schneider R.W."/>
        </authorList>
    </citation>
    <scope>NUCLEOTIDE SEQUENCE [GENOMIC DNA]</scope>
</reference>
<reference key="4">
    <citation type="journal article" date="2010" name="Nature">
        <title>Genome sequence of the palaeopolyploid soybean.</title>
        <authorList>
            <person name="Schmutz J."/>
            <person name="Cannon S.B."/>
            <person name="Schlueter J."/>
            <person name="Ma J."/>
            <person name="Mitros T."/>
            <person name="Nelson W."/>
            <person name="Hyten D.L."/>
            <person name="Song Q."/>
            <person name="Thelen J.J."/>
            <person name="Cheng J."/>
            <person name="Xu D."/>
            <person name="Hellsten U."/>
            <person name="May G.D."/>
            <person name="Yu Y."/>
            <person name="Sakurai T."/>
            <person name="Umezawa T."/>
            <person name="Bhattacharyya M.K."/>
            <person name="Sandhu D."/>
            <person name="Valliyodan B."/>
            <person name="Lindquist E."/>
            <person name="Peto M."/>
            <person name="Grant D."/>
            <person name="Shu S."/>
            <person name="Goodstein D."/>
            <person name="Barry K."/>
            <person name="Futrell-Griggs M."/>
            <person name="Abernathy B."/>
            <person name="Du J."/>
            <person name="Tian Z."/>
            <person name="Zhu L."/>
            <person name="Gill N."/>
            <person name="Joshi T."/>
            <person name="Libault M."/>
            <person name="Sethuraman A."/>
            <person name="Zhang X.-C."/>
            <person name="Shinozaki K."/>
            <person name="Nguyen H.T."/>
            <person name="Wing R.A."/>
            <person name="Cregan P."/>
            <person name="Specht J."/>
            <person name="Grimwood J."/>
            <person name="Rokhsar D."/>
            <person name="Stacey G."/>
            <person name="Shoemaker R.C."/>
            <person name="Jackson S.A."/>
        </authorList>
    </citation>
    <scope>NUCLEOTIDE SEQUENCE [LARGE SCALE GENOMIC DNA]</scope>
    <source>
        <strain>cv. Williams 82</strain>
    </source>
</reference>
<reference key="5">
    <citation type="journal article" date="2002" name="J. Allergy Clin. Immunol.">
        <title>Severe oral allergy syndrome and anaphylactic reactions caused by a Bet v 1- related PR-10 protein in soybean, SAM22.</title>
        <authorList>
            <person name="Kleine-Tebbe J."/>
            <person name="Vogel L."/>
            <person name="Crowell D.N."/>
            <person name="Haustein U.F."/>
            <person name="Vieths S."/>
        </authorList>
    </citation>
    <scope>ALLERGEN</scope>
</reference>
<reference key="6">
    <citation type="journal article" date="2004" name="J. Allergy Clin. Immunol.">
        <title>Soybean allergy in patients allergic to birch pollen: clinical investigation and molecular characterization of allergens.</title>
        <authorList>
            <person name="Mittag D."/>
            <person name="Vieths S."/>
            <person name="Vogel L."/>
            <person name="Becker W.M."/>
            <person name="Rihs H.P."/>
            <person name="Helbling A."/>
            <person name="Wuthrich B."/>
            <person name="Ballmer-Weber B.K."/>
        </authorList>
    </citation>
    <scope>ALLERGEN</scope>
</reference>
<reference key="7">
    <citation type="journal article" date="2009" name="Biosci. Rep.">
        <title>Cross-reactivity of pollen and food allergens: soybean Gly m 4 is a member of the Bet v 1 superfamily and closely resembles yellow lupine proteins.</title>
        <authorList>
            <person name="Berkner H."/>
            <person name="Neudecker P."/>
            <person name="Mittag D."/>
            <person name="Ballmer-Weber B.K."/>
            <person name="Schweimer K."/>
            <person name="Vieths S."/>
            <person name="Rosch P."/>
        </authorList>
    </citation>
    <scope>STRUCTURE BY NMR OF 2-158</scope>
</reference>
<dbReference type="EMBL" id="X60043">
    <property type="protein sequence ID" value="CAA42646.1"/>
    <property type="molecule type" value="mRNA"/>
</dbReference>
<dbReference type="EMBL" id="BT091267">
    <property type="protein sequence ID" value="ACU15400.1"/>
    <property type="molecule type" value="mRNA"/>
</dbReference>
<dbReference type="EMBL" id="GU563345">
    <property type="protein sequence ID" value="ADR51747.1"/>
    <property type="molecule type" value="Genomic_DNA"/>
</dbReference>
<dbReference type="EMBL" id="CM000840">
    <property type="protein sequence ID" value="KRH50781.1"/>
    <property type="molecule type" value="Genomic_DNA"/>
</dbReference>
<dbReference type="PIR" id="S20518">
    <property type="entry name" value="S20518"/>
</dbReference>
<dbReference type="RefSeq" id="NP_001236038.1">
    <property type="nucleotide sequence ID" value="NM_001249109.3"/>
</dbReference>
<dbReference type="RefSeq" id="NP_001238060.1">
    <property type="nucleotide sequence ID" value="NM_001251131.1"/>
</dbReference>
<dbReference type="RefSeq" id="XP_006582821.1">
    <property type="nucleotide sequence ID" value="XM_006582758.2"/>
</dbReference>
<dbReference type="PDB" id="2K7H">
    <property type="method" value="NMR"/>
    <property type="chains" value="A=2-158"/>
</dbReference>
<dbReference type="PDBsum" id="2K7H"/>
<dbReference type="BMRB" id="P26987"/>
<dbReference type="SMR" id="P26987"/>
<dbReference type="STRING" id="3847.P26987"/>
<dbReference type="Allergome" id="3297">
    <property type="allergen name" value="Gly m 4.0101"/>
</dbReference>
<dbReference type="Allergome" id="749">
    <property type="allergen name" value="Gly m 4"/>
</dbReference>
<dbReference type="PaxDb" id="3847-GLYMA07G37240.1"/>
<dbReference type="ProMEX" id="P26987"/>
<dbReference type="EnsemblPlants" id="KRH50781">
    <property type="protein sequence ID" value="KRH50781"/>
    <property type="gene ID" value="GLYMA_07G243500"/>
</dbReference>
<dbReference type="GeneID" id="547915"/>
<dbReference type="Gramene" id="KRH50781">
    <property type="protein sequence ID" value="KRH50781"/>
    <property type="gene ID" value="GLYMA_07G243500"/>
</dbReference>
<dbReference type="KEGG" id="gmx:100101844"/>
<dbReference type="KEGG" id="gmx:547915"/>
<dbReference type="eggNOG" id="ENOG502RXTQ">
    <property type="taxonomic scope" value="Eukaryota"/>
</dbReference>
<dbReference type="InParanoid" id="P26987"/>
<dbReference type="OMA" id="IAKHNIN"/>
<dbReference type="OrthoDB" id="1858506at2759"/>
<dbReference type="EvolutionaryTrace" id="P26987"/>
<dbReference type="Proteomes" id="UP000008827">
    <property type="component" value="Chromosome 7"/>
</dbReference>
<dbReference type="GO" id="GO:0005737">
    <property type="term" value="C:cytoplasm"/>
    <property type="evidence" value="ECO:0000318"/>
    <property type="project" value="GO_Central"/>
</dbReference>
<dbReference type="GO" id="GO:0005634">
    <property type="term" value="C:nucleus"/>
    <property type="evidence" value="ECO:0000318"/>
    <property type="project" value="GO_Central"/>
</dbReference>
<dbReference type="GO" id="GO:0010427">
    <property type="term" value="F:abscisic acid binding"/>
    <property type="evidence" value="ECO:0000318"/>
    <property type="project" value="GO_Central"/>
</dbReference>
<dbReference type="GO" id="GO:0004864">
    <property type="term" value="F:protein phosphatase inhibitor activity"/>
    <property type="evidence" value="ECO:0000318"/>
    <property type="project" value="GO_Central"/>
</dbReference>
<dbReference type="GO" id="GO:0038023">
    <property type="term" value="F:signaling receptor activity"/>
    <property type="evidence" value="ECO:0000318"/>
    <property type="project" value="GO_Central"/>
</dbReference>
<dbReference type="GO" id="GO:0009738">
    <property type="term" value="P:abscisic acid-activated signaling pathway"/>
    <property type="evidence" value="ECO:0000318"/>
    <property type="project" value="GO_Central"/>
</dbReference>
<dbReference type="GO" id="GO:0006952">
    <property type="term" value="P:defense response"/>
    <property type="evidence" value="ECO:0007669"/>
    <property type="project" value="UniProtKB-KW"/>
</dbReference>
<dbReference type="CDD" id="cd07816">
    <property type="entry name" value="Bet_v1-like"/>
    <property type="match status" value="1"/>
</dbReference>
<dbReference type="FunFam" id="3.30.530.20:FF:000007">
    <property type="entry name" value="Major pollen allergen Bet v 1-A"/>
    <property type="match status" value="1"/>
</dbReference>
<dbReference type="Gene3D" id="3.30.530.20">
    <property type="match status" value="1"/>
</dbReference>
<dbReference type="InterPro" id="IPR000916">
    <property type="entry name" value="Bet_v_I/MLP"/>
</dbReference>
<dbReference type="InterPro" id="IPR024949">
    <property type="entry name" value="Bet_v_I_allergen"/>
</dbReference>
<dbReference type="InterPro" id="IPR050279">
    <property type="entry name" value="Plant_def-hormone_signal"/>
</dbReference>
<dbReference type="InterPro" id="IPR023393">
    <property type="entry name" value="START-like_dom_sf"/>
</dbReference>
<dbReference type="PANTHER" id="PTHR31213">
    <property type="entry name" value="OS08G0374000 PROTEIN-RELATED"/>
    <property type="match status" value="1"/>
</dbReference>
<dbReference type="PANTHER" id="PTHR31213:SF55">
    <property type="entry name" value="STRESS-INDUCED PROTEIN SAM22"/>
    <property type="match status" value="1"/>
</dbReference>
<dbReference type="Pfam" id="PF00407">
    <property type="entry name" value="Bet_v_1"/>
    <property type="match status" value="1"/>
</dbReference>
<dbReference type="PRINTS" id="PR00634">
    <property type="entry name" value="BETALLERGEN"/>
</dbReference>
<dbReference type="SMART" id="SM01037">
    <property type="entry name" value="Bet_v_1"/>
    <property type="match status" value="1"/>
</dbReference>
<dbReference type="SUPFAM" id="SSF55961">
    <property type="entry name" value="Bet v1-like"/>
    <property type="match status" value="1"/>
</dbReference>
<dbReference type="PROSITE" id="PS00451">
    <property type="entry name" value="PATHOGENESIS_BETVI"/>
    <property type="match status" value="1"/>
</dbReference>
<name>SAM22_SOYBN</name>